<feature type="transit peptide" description="Chloroplast" evidence="1">
    <location>
        <begin position="1"/>
        <end position="37"/>
    </location>
</feature>
<feature type="chain" id="PRO_0000413686" description="Chaperonin 60 subunit beta 4, chloroplastic">
    <location>
        <begin position="38"/>
        <end position="611"/>
    </location>
</feature>
<feature type="region of interest" description="Disordered" evidence="2">
    <location>
        <begin position="574"/>
        <end position="595"/>
    </location>
</feature>
<feature type="coiled-coil region" evidence="1">
    <location>
        <begin position="377"/>
        <end position="480"/>
    </location>
</feature>
<feature type="splice variant" id="VSP_041957" description="In isoform 2." evidence="7">
    <original>MAFSQAALSALPLSDRTFRKKPSSSSSSSPNFVLRVRAAAKEVHFNRDGSVTKKLQ</original>
    <variation>MVVK</variation>
    <location>
        <begin position="1"/>
        <end position="56"/>
    </location>
</feature>
<feature type="sequence conflict" description="In Ref. 3; BAD95277." evidence="7" ref="3">
    <original>T</original>
    <variation>N</variation>
    <location>
        <position position="394"/>
    </location>
</feature>
<proteinExistence type="evidence at protein level"/>
<organism>
    <name type="scientific">Arabidopsis thaliana</name>
    <name type="common">Mouse-ear cress</name>
    <dbReference type="NCBI Taxonomy" id="3702"/>
    <lineage>
        <taxon>Eukaryota</taxon>
        <taxon>Viridiplantae</taxon>
        <taxon>Streptophyta</taxon>
        <taxon>Embryophyta</taxon>
        <taxon>Tracheophyta</taxon>
        <taxon>Spermatophyta</taxon>
        <taxon>Magnoliopsida</taxon>
        <taxon>eudicotyledons</taxon>
        <taxon>Gunneridae</taxon>
        <taxon>Pentapetalae</taxon>
        <taxon>rosids</taxon>
        <taxon>malvids</taxon>
        <taxon>Brassicales</taxon>
        <taxon>Brassicaceae</taxon>
        <taxon>Camelineae</taxon>
        <taxon>Arabidopsis</taxon>
    </lineage>
</organism>
<keyword id="KW-0025">Alternative splicing</keyword>
<keyword id="KW-0067">ATP-binding</keyword>
<keyword id="KW-0143">Chaperone</keyword>
<keyword id="KW-0150">Chloroplast</keyword>
<keyword id="KW-0175">Coiled coil</keyword>
<keyword id="KW-0547">Nucleotide-binding</keyword>
<keyword id="KW-0934">Plastid</keyword>
<keyword id="KW-1185">Reference proteome</keyword>
<keyword id="KW-0809">Transit peptide</keyword>
<gene>
    <name type="primary">CPN60B4</name>
    <name type="synonym">Cpn60-B(4)</name>
    <name type="ordered locus">At1g26230</name>
    <name type="ORF">F28B23.11</name>
</gene>
<name>CPNB4_ARATH</name>
<comment type="function">
    <text evidence="4 5 6">Involved specifically in the folding of NDHH, a subunit of the chloroplast NADH dehydrogenase-like complex (NDH).</text>
</comment>
<comment type="subunit">
    <text evidence="4 6">Part of the Cpn60 complex composed of 7 alpha and 7 beta subunits. Can also form a complex composed of 14 beta subunits only. Both complexes show ATPase activity. The Cpn60 complex interacts with the Cpn10 complex. Interacts with NDHH.</text>
</comment>
<comment type="subcellular location">
    <subcellularLocation>
        <location evidence="5">Plastid</location>
        <location evidence="5">Chloroplast stroma</location>
    </subcellularLocation>
</comment>
<comment type="alternative products">
    <event type="alternative splicing"/>
    <isoform>
        <id>Q9C667-1</id>
        <name>1</name>
        <sequence type="displayed"/>
    </isoform>
    <isoform>
        <id>Q9C667-2</id>
        <name>2</name>
        <sequence type="described" ref="VSP_041957"/>
    </isoform>
</comment>
<comment type="induction">
    <text evidence="3">Up-regulated by light.</text>
</comment>
<comment type="domain">
    <text>The C-terminus (568-611) is required for efficient NDHH folding, but not for the formation of the chaperonin complex.</text>
</comment>
<comment type="disruption phenotype">
    <text evidence="5">No visible phenotype besides impaired NDH activity.</text>
</comment>
<comment type="miscellaneous">
    <text>CPN60B1, CPN60B2 or CPN60B3 cannot complement the function of CPN60B4.</text>
</comment>
<comment type="miscellaneous">
    <text>Assisted protein folding requires ATP hydrolysis, but not K(+) ions.</text>
</comment>
<comment type="similarity">
    <text evidence="7">Belongs to the chaperonin (HSP60) family.</text>
</comment>
<dbReference type="EMBL" id="AC079829">
    <property type="protein sequence ID" value="AAG50688.1"/>
    <property type="molecule type" value="Genomic_DNA"/>
</dbReference>
<dbReference type="EMBL" id="CP002684">
    <property type="protein sequence ID" value="AEE30663.1"/>
    <property type="molecule type" value="Genomic_DNA"/>
</dbReference>
<dbReference type="EMBL" id="CP002684">
    <property type="protein sequence ID" value="ANM59894.1"/>
    <property type="molecule type" value="Genomic_DNA"/>
</dbReference>
<dbReference type="EMBL" id="AK221637">
    <property type="protein sequence ID" value="BAD95277.1"/>
    <property type="molecule type" value="mRNA"/>
</dbReference>
<dbReference type="PIR" id="E86388">
    <property type="entry name" value="E86388"/>
</dbReference>
<dbReference type="RefSeq" id="NP_001185097.1">
    <molecule id="Q9C667-2"/>
    <property type="nucleotide sequence ID" value="NM_001198168.2"/>
</dbReference>
<dbReference type="RefSeq" id="NP_173947.1">
    <molecule id="Q9C667-1"/>
    <property type="nucleotide sequence ID" value="NM_102387.3"/>
</dbReference>
<dbReference type="SMR" id="Q9C667"/>
<dbReference type="BioGRID" id="24401">
    <property type="interactions" value="1"/>
</dbReference>
<dbReference type="FunCoup" id="Q9C667">
    <property type="interactions" value="908"/>
</dbReference>
<dbReference type="STRING" id="3702.Q9C667"/>
<dbReference type="PaxDb" id="3702-AT1G26230.1"/>
<dbReference type="EnsemblPlants" id="AT1G26230.1">
    <molecule id="Q9C667-1"/>
    <property type="protein sequence ID" value="AT1G26230.1"/>
    <property type="gene ID" value="AT1G26230"/>
</dbReference>
<dbReference type="EnsemblPlants" id="AT1G26230.4">
    <molecule id="Q9C667-2"/>
    <property type="protein sequence ID" value="AT1G26230.4"/>
    <property type="gene ID" value="AT1G26230"/>
</dbReference>
<dbReference type="GeneID" id="839164"/>
<dbReference type="Gramene" id="AT1G26230.1">
    <molecule id="Q9C667-1"/>
    <property type="protein sequence ID" value="AT1G26230.1"/>
    <property type="gene ID" value="AT1G26230"/>
</dbReference>
<dbReference type="Gramene" id="AT1G26230.4">
    <molecule id="Q9C667-2"/>
    <property type="protein sequence ID" value="AT1G26230.4"/>
    <property type="gene ID" value="AT1G26230"/>
</dbReference>
<dbReference type="KEGG" id="ath:AT1G26230"/>
<dbReference type="Araport" id="AT1G26230"/>
<dbReference type="TAIR" id="AT1G26230">
    <property type="gene designation" value="CPN60BETA4"/>
</dbReference>
<dbReference type="eggNOG" id="KOG0356">
    <property type="taxonomic scope" value="Eukaryota"/>
</dbReference>
<dbReference type="InParanoid" id="Q9C667"/>
<dbReference type="OMA" id="EDMGYTL"/>
<dbReference type="PhylomeDB" id="Q9C667"/>
<dbReference type="PRO" id="PR:Q9C667"/>
<dbReference type="Proteomes" id="UP000006548">
    <property type="component" value="Chromosome 1"/>
</dbReference>
<dbReference type="ExpressionAtlas" id="Q9C667">
    <property type="expression patterns" value="baseline and differential"/>
</dbReference>
<dbReference type="GO" id="GO:0009507">
    <property type="term" value="C:chloroplast"/>
    <property type="evidence" value="ECO:0007005"/>
    <property type="project" value="TAIR"/>
</dbReference>
<dbReference type="GO" id="GO:0009941">
    <property type="term" value="C:chloroplast envelope"/>
    <property type="evidence" value="ECO:0007005"/>
    <property type="project" value="TAIR"/>
</dbReference>
<dbReference type="GO" id="GO:0009570">
    <property type="term" value="C:chloroplast stroma"/>
    <property type="evidence" value="ECO:0007005"/>
    <property type="project" value="TAIR"/>
</dbReference>
<dbReference type="GO" id="GO:0005524">
    <property type="term" value="F:ATP binding"/>
    <property type="evidence" value="ECO:0007669"/>
    <property type="project" value="UniProtKB-KW"/>
</dbReference>
<dbReference type="GO" id="GO:0140662">
    <property type="term" value="F:ATP-dependent protein folding chaperone"/>
    <property type="evidence" value="ECO:0007669"/>
    <property type="project" value="InterPro"/>
</dbReference>
<dbReference type="GO" id="GO:0006457">
    <property type="term" value="P:protein folding"/>
    <property type="evidence" value="ECO:0000315"/>
    <property type="project" value="TAIR"/>
</dbReference>
<dbReference type="GO" id="GO:0042026">
    <property type="term" value="P:protein refolding"/>
    <property type="evidence" value="ECO:0007669"/>
    <property type="project" value="InterPro"/>
</dbReference>
<dbReference type="CDD" id="cd03344">
    <property type="entry name" value="GroEL"/>
    <property type="match status" value="1"/>
</dbReference>
<dbReference type="FunFam" id="3.50.7.10:FF:000001">
    <property type="entry name" value="60 kDa chaperonin"/>
    <property type="match status" value="1"/>
</dbReference>
<dbReference type="Gene3D" id="3.50.7.10">
    <property type="entry name" value="GroEL"/>
    <property type="match status" value="1"/>
</dbReference>
<dbReference type="Gene3D" id="1.10.560.10">
    <property type="entry name" value="GroEL-like equatorial domain"/>
    <property type="match status" value="1"/>
</dbReference>
<dbReference type="Gene3D" id="3.30.260.10">
    <property type="entry name" value="TCP-1-like chaperonin intermediate domain"/>
    <property type="match status" value="1"/>
</dbReference>
<dbReference type="InterPro" id="IPR001844">
    <property type="entry name" value="Cpn60/GroEL"/>
</dbReference>
<dbReference type="InterPro" id="IPR002423">
    <property type="entry name" value="Cpn60/GroEL/TCP-1"/>
</dbReference>
<dbReference type="InterPro" id="IPR027409">
    <property type="entry name" value="GroEL-like_apical_dom_sf"/>
</dbReference>
<dbReference type="InterPro" id="IPR027413">
    <property type="entry name" value="GROEL-like_equatorial_sf"/>
</dbReference>
<dbReference type="InterPro" id="IPR027410">
    <property type="entry name" value="TCP-1-like_intermed_sf"/>
</dbReference>
<dbReference type="NCBIfam" id="TIGR02348">
    <property type="entry name" value="GroEL"/>
    <property type="match status" value="1"/>
</dbReference>
<dbReference type="NCBIfam" id="NF000592">
    <property type="entry name" value="PRK00013.1"/>
    <property type="match status" value="1"/>
</dbReference>
<dbReference type="NCBIfam" id="NF009487">
    <property type="entry name" value="PRK12849.1"/>
    <property type="match status" value="1"/>
</dbReference>
<dbReference type="NCBIfam" id="NF009488">
    <property type="entry name" value="PRK12850.1"/>
    <property type="match status" value="1"/>
</dbReference>
<dbReference type="NCBIfam" id="NF009489">
    <property type="entry name" value="PRK12851.1"/>
    <property type="match status" value="1"/>
</dbReference>
<dbReference type="PANTHER" id="PTHR45633">
    <property type="entry name" value="60 KDA HEAT SHOCK PROTEIN, MITOCHONDRIAL"/>
    <property type="match status" value="1"/>
</dbReference>
<dbReference type="Pfam" id="PF00118">
    <property type="entry name" value="Cpn60_TCP1"/>
    <property type="match status" value="1"/>
</dbReference>
<dbReference type="PRINTS" id="PR00298">
    <property type="entry name" value="CHAPERONIN60"/>
</dbReference>
<dbReference type="SUPFAM" id="SSF52029">
    <property type="entry name" value="GroEL apical domain-like"/>
    <property type="match status" value="1"/>
</dbReference>
<dbReference type="SUPFAM" id="SSF48592">
    <property type="entry name" value="GroEL equatorial domain-like"/>
    <property type="match status" value="1"/>
</dbReference>
<dbReference type="SUPFAM" id="SSF54849">
    <property type="entry name" value="GroEL-intermediate domain like"/>
    <property type="match status" value="1"/>
</dbReference>
<evidence type="ECO:0000255" key="1"/>
<evidence type="ECO:0000256" key="2">
    <source>
        <dbReference type="SAM" id="MobiDB-lite"/>
    </source>
</evidence>
<evidence type="ECO:0000269" key="3">
    <source>
    </source>
</evidence>
<evidence type="ECO:0000269" key="4">
    <source>
    </source>
</evidence>
<evidence type="ECO:0000269" key="5">
    <source>
    </source>
</evidence>
<evidence type="ECO:0000269" key="6">
    <source ref="5"/>
</evidence>
<evidence type="ECO:0000305" key="7"/>
<reference key="1">
    <citation type="journal article" date="2000" name="Nature">
        <title>Sequence and analysis of chromosome 1 of the plant Arabidopsis thaliana.</title>
        <authorList>
            <person name="Theologis A."/>
            <person name="Ecker J.R."/>
            <person name="Palm C.J."/>
            <person name="Federspiel N.A."/>
            <person name="Kaul S."/>
            <person name="White O."/>
            <person name="Alonso J."/>
            <person name="Altafi H."/>
            <person name="Araujo R."/>
            <person name="Bowman C.L."/>
            <person name="Brooks S.Y."/>
            <person name="Buehler E."/>
            <person name="Chan A."/>
            <person name="Chao Q."/>
            <person name="Chen H."/>
            <person name="Cheuk R.F."/>
            <person name="Chin C.W."/>
            <person name="Chung M.K."/>
            <person name="Conn L."/>
            <person name="Conway A.B."/>
            <person name="Conway A.R."/>
            <person name="Creasy T.H."/>
            <person name="Dewar K."/>
            <person name="Dunn P."/>
            <person name="Etgu P."/>
            <person name="Feldblyum T.V."/>
            <person name="Feng J.-D."/>
            <person name="Fong B."/>
            <person name="Fujii C.Y."/>
            <person name="Gill J.E."/>
            <person name="Goldsmith A.D."/>
            <person name="Haas B."/>
            <person name="Hansen N.F."/>
            <person name="Hughes B."/>
            <person name="Huizar L."/>
            <person name="Hunter J.L."/>
            <person name="Jenkins J."/>
            <person name="Johnson-Hopson C."/>
            <person name="Khan S."/>
            <person name="Khaykin E."/>
            <person name="Kim C.J."/>
            <person name="Koo H.L."/>
            <person name="Kremenetskaia I."/>
            <person name="Kurtz D.B."/>
            <person name="Kwan A."/>
            <person name="Lam B."/>
            <person name="Langin-Hooper S."/>
            <person name="Lee A."/>
            <person name="Lee J.M."/>
            <person name="Lenz C.A."/>
            <person name="Li J.H."/>
            <person name="Li Y.-P."/>
            <person name="Lin X."/>
            <person name="Liu S.X."/>
            <person name="Liu Z.A."/>
            <person name="Luros J.S."/>
            <person name="Maiti R."/>
            <person name="Marziali A."/>
            <person name="Militscher J."/>
            <person name="Miranda M."/>
            <person name="Nguyen M."/>
            <person name="Nierman W.C."/>
            <person name="Osborne B.I."/>
            <person name="Pai G."/>
            <person name="Peterson J."/>
            <person name="Pham P.K."/>
            <person name="Rizzo M."/>
            <person name="Rooney T."/>
            <person name="Rowley D."/>
            <person name="Sakano H."/>
            <person name="Salzberg S.L."/>
            <person name="Schwartz J.R."/>
            <person name="Shinn P."/>
            <person name="Southwick A.M."/>
            <person name="Sun H."/>
            <person name="Tallon L.J."/>
            <person name="Tambunga G."/>
            <person name="Toriumi M.J."/>
            <person name="Town C.D."/>
            <person name="Utterback T."/>
            <person name="Van Aken S."/>
            <person name="Vaysberg M."/>
            <person name="Vysotskaia V.S."/>
            <person name="Walker M."/>
            <person name="Wu D."/>
            <person name="Yu G."/>
            <person name="Fraser C.M."/>
            <person name="Venter J.C."/>
            <person name="Davis R.W."/>
        </authorList>
    </citation>
    <scope>NUCLEOTIDE SEQUENCE [LARGE SCALE GENOMIC DNA]</scope>
    <source>
        <strain>cv. Columbia</strain>
    </source>
</reference>
<reference key="2">
    <citation type="journal article" date="2017" name="Plant J.">
        <title>Araport11: a complete reannotation of the Arabidopsis thaliana reference genome.</title>
        <authorList>
            <person name="Cheng C.Y."/>
            <person name="Krishnakumar V."/>
            <person name="Chan A.P."/>
            <person name="Thibaud-Nissen F."/>
            <person name="Schobel S."/>
            <person name="Town C.D."/>
        </authorList>
    </citation>
    <scope>GENOME REANNOTATION</scope>
    <source>
        <strain>cv. Columbia</strain>
    </source>
</reference>
<reference key="3">
    <citation type="submission" date="2005-03" db="EMBL/GenBank/DDBJ databases">
        <title>Large-scale analysis of RIKEN Arabidopsis full-length (RAFL) cDNAs.</title>
        <authorList>
            <person name="Totoki Y."/>
            <person name="Seki M."/>
            <person name="Ishida J."/>
            <person name="Nakajima M."/>
            <person name="Enju A."/>
            <person name="Kamiya A."/>
            <person name="Narusaka M."/>
            <person name="Shin-i T."/>
            <person name="Nakagawa M."/>
            <person name="Sakamoto N."/>
            <person name="Oishi K."/>
            <person name="Kohara Y."/>
            <person name="Kobayashi M."/>
            <person name="Toyoda A."/>
            <person name="Sakaki Y."/>
            <person name="Sakurai T."/>
            <person name="Iida K."/>
            <person name="Akiyama K."/>
            <person name="Satou M."/>
            <person name="Toyoda T."/>
            <person name="Konagaya A."/>
            <person name="Carninci P."/>
            <person name="Kawai J."/>
            <person name="Hayashizaki Y."/>
            <person name="Shinozaki K."/>
        </authorList>
    </citation>
    <scope>NUCLEOTIDE SEQUENCE [LARGE SCALE MRNA] (ISOFORM 1)</scope>
    <source>
        <strain>cv. Columbia</strain>
    </source>
</reference>
<reference key="4">
    <citation type="journal article" date="1993" name="Plant Physiol.">
        <title>Differential involvement of the circadian clock in the expression of genes required for ribulose-1,5-bisphosphate carboxylase/oxygenase synthesis, assembly, and activation in Arabidopsis thaliana.</title>
        <authorList>
            <person name="Pilgrim M.L."/>
            <person name="McClung C.R."/>
        </authorList>
    </citation>
    <scope>INDUCTION BY LIGHT</scope>
</reference>
<reference key="5">
    <citation type="journal article" date="1995" name="J. Biol. Chem.">
        <title>Functional characterization of the higher plant chloroplast chaperonins.</title>
        <authorList>
            <person name="Viitanen P.V."/>
            <person name="Schmidt M."/>
            <person name="Buchner J."/>
            <person name="Suzuki T."/>
            <person name="Vierling E."/>
            <person name="Dickson R."/>
            <person name="Lorimer G.H."/>
            <person name="Gatenby A."/>
            <person name="Soll J."/>
        </authorList>
    </citation>
    <scope>FUNCTION</scope>
    <scope>INTERACTION</scope>
</reference>
<reference key="6">
    <citation type="journal article" date="2001" name="Cell Stress Chaperones">
        <title>Arabidopsis thaliana type I and II chaperonins.</title>
        <authorList>
            <person name="Hill J.E."/>
            <person name="Hemmingsen S.M."/>
        </authorList>
    </citation>
    <scope>GENE FAMILY</scope>
    <scope>NOMENCLATURE</scope>
</reference>
<reference key="7">
    <citation type="journal article" date="2009" name="Cell Stress Chaperones">
        <title>Differential effects of co-chaperonin homologs on cpn60 oligomers.</title>
        <authorList>
            <person name="Bonshtien A.L."/>
            <person name="Parnas A."/>
            <person name="Sharkia R."/>
            <person name="Niv A."/>
            <person name="Mizrahi I."/>
            <person name="Azem A."/>
            <person name="Weiss C."/>
        </authorList>
    </citation>
    <scope>FUNCTION</scope>
    <scope>IDENTIFICATION IN CPN60 COMPLEX</scope>
</reference>
<reference key="8">
    <citation type="journal article" date="2011" name="PLoS Biol.">
        <title>A chaperonin subunit with unique structures is essential for folding of a specific substrate.</title>
        <authorList>
            <person name="Peng L."/>
            <person name="Fukao Y."/>
            <person name="Myouga F."/>
            <person name="Motohashi R."/>
            <person name="Shinozaki K."/>
            <person name="Shikanai T."/>
        </authorList>
    </citation>
    <scope>FUNCTION</scope>
    <scope>IDENTIFICATION BY MASS SPECTROMETRY</scope>
    <scope>SUBCELLULAR LOCATION</scope>
    <scope>DISRUPTION PHENOTYPE</scope>
    <scope>3D-STRUCTURE MODELING</scope>
    <scope>GENE FAMILY</scope>
    <scope>NOMENCLATURE</scope>
</reference>
<accession>Q9C667</accession>
<accession>F4IE47</accession>
<accession>Q56XN6</accession>
<sequence length="611" mass="66796">MAFSQAALSALPLSDRTFRKKPSSSSSSSPNFVLRVRAAAKEVHFNRDGSVTKKLQAGADMVAKLLGVTLGPKGRNVVLQNKYGPPRIVNDGETVLKEIELEDPLENVGVKLVRQAGAKTNDLAGDGSTTSIILAHGLITEGIKVISAGTNPIQVARGIEKTTKALVLELKSMSREIEDHELAHVAAVSAGNDYEVGNMISNAFQQVGRTGVVTIEKGKYLVNNLEIVEGMQFNRGYLSPYFVTDRRKREAEFHDCKLLLVDKKITNPKDMFKILDSAVKEEFPVLIVAEDIEQDALAPVIRNKLKGNLKVAAIKAPAFGERKSHCLDDLAIFTGATVIRDEMGLSLEKAGKEVLGTAKRVLVTKDSTLIVTNGFTQKAVDERVSQIKNLIENTEENFQKKILNERVARLSGGIAIIQVGALTQVELKDKQLKVEDALNATKSAIEEGIVVGGGCALLRLATKVDRIKETLDNTEQKIGAEIFKKALSYPIRLIAKNADTNGNIVIEKVLSNKNTMYGYNAAKNQYEDLMLAGIIDPTKVVRCCLEHASSVAQTFLTSDCVVVEIKEIKPRPIINPPLPTSSPATSSMFPDRKLPRFPQIMPRTRSHFPRK</sequence>
<protein>
    <recommendedName>
        <fullName>Chaperonin 60 subunit beta 4, chloroplastic</fullName>
        <shortName>CPN-60 beta 4</shortName>
    </recommendedName>
</protein>